<sequence length="324" mass="36748">MGNLLKVLTCTDLEQGPNFFLDFENAQPTESEKEIYNQVNVVLKDAEGILEDLQSYRGAGHEIREAIQHPADEKLQEKAWGAVVPLVGKLKKFYEFSQRLEAALRGLLGALTSTPYSPTQHLEREQALAKQFAEILHFTLRFDELKMTNPAIQNDFSYYRRTLSRMRINNVPAEGENEVNNELANRMSLFYAEATPMLKTLSDATTKFVSENKNLPIENTTDCLSTMASVCRVMLETPEYRSRFTNEETVSFCLRVMVGVIILYDHVHPVGAFAKTSKIDMKGCIKVLKDQPPNSVEGLLNALRYTTKHLNDETTSKQIKSMLQ</sequence>
<name>CYRIB_HUMAN</name>
<accession>Q9NUQ9</accession>
<accession>Q96AZ5</accession>
<accession>Q9NW21</accession>
<accession>Q9NZE7</accession>
<dbReference type="EMBL" id="AF208851">
    <property type="protein sequence ID" value="AAF64265.1"/>
    <property type="status" value="ALT_FRAME"/>
    <property type="molecule type" value="mRNA"/>
</dbReference>
<dbReference type="EMBL" id="AY598320">
    <property type="protein sequence ID" value="AAT06731.1"/>
    <property type="molecule type" value="mRNA"/>
</dbReference>
<dbReference type="EMBL" id="AK001226">
    <property type="protein sequence ID" value="BAA91566.1"/>
    <property type="molecule type" value="mRNA"/>
</dbReference>
<dbReference type="EMBL" id="AK002059">
    <property type="protein sequence ID" value="BAA92062.1"/>
    <property type="molecule type" value="mRNA"/>
</dbReference>
<dbReference type="EMBL" id="AC022973">
    <property type="status" value="NOT_ANNOTATED_CDS"/>
    <property type="molecule type" value="Genomic_DNA"/>
</dbReference>
<dbReference type="EMBL" id="AC131568">
    <property type="status" value="NOT_ANNOTATED_CDS"/>
    <property type="molecule type" value="Genomic_DNA"/>
</dbReference>
<dbReference type="EMBL" id="BC003599">
    <property type="protein sequence ID" value="AAH03599.1"/>
    <property type="molecule type" value="mRNA"/>
</dbReference>
<dbReference type="EMBL" id="BC016345">
    <property type="protein sequence ID" value="AAH16345.1"/>
    <property type="molecule type" value="mRNA"/>
</dbReference>
<dbReference type="EMBL" id="BC017297">
    <property type="protein sequence ID" value="AAH17297.1"/>
    <property type="molecule type" value="mRNA"/>
</dbReference>
<dbReference type="CCDS" id="CCDS6361.1">
    <molecule id="Q9NUQ9-1"/>
</dbReference>
<dbReference type="CCDS" id="CCDS83327.1">
    <molecule id="Q9NUQ9-2"/>
</dbReference>
<dbReference type="RefSeq" id="NP_001243692.1">
    <molecule id="Q9NUQ9-1"/>
    <property type="nucleotide sequence ID" value="NM_001256763.2"/>
</dbReference>
<dbReference type="RefSeq" id="NP_001317541.1">
    <molecule id="Q9NUQ9-2"/>
    <property type="nucleotide sequence ID" value="NM_001330612.2"/>
</dbReference>
<dbReference type="RefSeq" id="NP_001340171.1">
    <molecule id="Q9NUQ9-1"/>
    <property type="nucleotide sequence ID" value="NM_001353242.2"/>
</dbReference>
<dbReference type="RefSeq" id="NP_001340172.1">
    <molecule id="Q9NUQ9-1"/>
    <property type="nucleotide sequence ID" value="NM_001353243.2"/>
</dbReference>
<dbReference type="RefSeq" id="NP_001340173.1">
    <molecule id="Q9NUQ9-1"/>
    <property type="nucleotide sequence ID" value="NM_001353244.2"/>
</dbReference>
<dbReference type="RefSeq" id="NP_001340174.1">
    <molecule id="Q9NUQ9-1"/>
    <property type="nucleotide sequence ID" value="NM_001353245.1"/>
</dbReference>
<dbReference type="RefSeq" id="NP_001340175.1">
    <molecule id="Q9NUQ9-1"/>
    <property type="nucleotide sequence ID" value="NM_001353246.1"/>
</dbReference>
<dbReference type="RefSeq" id="NP_001340176.1">
    <molecule id="Q9NUQ9-1"/>
    <property type="nucleotide sequence ID" value="NM_001353247.1"/>
</dbReference>
<dbReference type="RefSeq" id="NP_001340177.1">
    <molecule id="Q9NUQ9-1"/>
    <property type="nucleotide sequence ID" value="NM_001353248.2"/>
</dbReference>
<dbReference type="RefSeq" id="NP_001340178.1">
    <molecule id="Q9NUQ9-1"/>
    <property type="nucleotide sequence ID" value="NM_001353249.1"/>
</dbReference>
<dbReference type="RefSeq" id="NP_001340179.1">
    <molecule id="Q9NUQ9-1"/>
    <property type="nucleotide sequence ID" value="NM_001353250.1"/>
</dbReference>
<dbReference type="RefSeq" id="NP_001340180.1">
    <molecule id="Q9NUQ9-1"/>
    <property type="nucleotide sequence ID" value="NM_001353251.1"/>
</dbReference>
<dbReference type="RefSeq" id="NP_001340181.1">
    <molecule id="Q9NUQ9-1"/>
    <property type="nucleotide sequence ID" value="NM_001353252.1"/>
</dbReference>
<dbReference type="RefSeq" id="NP_001340182.1">
    <molecule id="Q9NUQ9-1"/>
    <property type="nucleotide sequence ID" value="NM_001353253.1"/>
</dbReference>
<dbReference type="RefSeq" id="NP_001340183.1">
    <molecule id="Q9NUQ9-1"/>
    <property type="nucleotide sequence ID" value="NM_001353254.2"/>
</dbReference>
<dbReference type="RefSeq" id="NP_001340184.1">
    <molecule id="Q9NUQ9-1"/>
    <property type="nucleotide sequence ID" value="NM_001353255.1"/>
</dbReference>
<dbReference type="RefSeq" id="NP_001340185.1">
    <molecule id="Q9NUQ9-1"/>
    <property type="nucleotide sequence ID" value="NM_001353256.2"/>
</dbReference>
<dbReference type="RefSeq" id="NP_001340186.1">
    <molecule id="Q9NUQ9-1"/>
    <property type="nucleotide sequence ID" value="NM_001353257.2"/>
</dbReference>
<dbReference type="RefSeq" id="NP_001340187.1">
    <molecule id="Q9NUQ9-1"/>
    <property type="nucleotide sequence ID" value="NM_001353258.2"/>
</dbReference>
<dbReference type="RefSeq" id="NP_001340188.1">
    <molecule id="Q9NUQ9-1"/>
    <property type="nucleotide sequence ID" value="NM_001353259.2"/>
</dbReference>
<dbReference type="RefSeq" id="NP_001340189.1">
    <molecule id="Q9NUQ9-1"/>
    <property type="nucleotide sequence ID" value="NM_001353260.2"/>
</dbReference>
<dbReference type="RefSeq" id="NP_001340190.1">
    <molecule id="Q9NUQ9-1"/>
    <property type="nucleotide sequence ID" value="NM_001353261.2"/>
</dbReference>
<dbReference type="RefSeq" id="NP_001340191.1">
    <molecule id="Q9NUQ9-1"/>
    <property type="nucleotide sequence ID" value="NM_001353262.2"/>
</dbReference>
<dbReference type="RefSeq" id="NP_001340192.1">
    <molecule id="Q9NUQ9-1"/>
    <property type="nucleotide sequence ID" value="NM_001353263.2"/>
</dbReference>
<dbReference type="RefSeq" id="NP_001340193.1">
    <molecule id="Q9NUQ9-1"/>
    <property type="nucleotide sequence ID" value="NM_001353264.2"/>
</dbReference>
<dbReference type="RefSeq" id="NP_001340194.1">
    <molecule id="Q9NUQ9-1"/>
    <property type="nucleotide sequence ID" value="NM_001353265.2"/>
</dbReference>
<dbReference type="RefSeq" id="NP_001340195.1">
    <molecule id="Q9NUQ9-1"/>
    <property type="nucleotide sequence ID" value="NM_001353266.2"/>
</dbReference>
<dbReference type="RefSeq" id="NP_001340196.1">
    <molecule id="Q9NUQ9-1"/>
    <property type="nucleotide sequence ID" value="NM_001353267.2"/>
</dbReference>
<dbReference type="RefSeq" id="NP_001340197.1">
    <molecule id="Q9NUQ9-1"/>
    <property type="nucleotide sequence ID" value="NM_001353268.2"/>
</dbReference>
<dbReference type="RefSeq" id="NP_001340198.1">
    <molecule id="Q9NUQ9-2"/>
    <property type="nucleotide sequence ID" value="NM_001353269.1"/>
</dbReference>
<dbReference type="RefSeq" id="NP_001340199.1">
    <molecule id="Q9NUQ9-2"/>
    <property type="nucleotide sequence ID" value="NM_001353270.1"/>
</dbReference>
<dbReference type="RefSeq" id="NP_001340200.1">
    <molecule id="Q9NUQ9-2"/>
    <property type="nucleotide sequence ID" value="NM_001353271.1"/>
</dbReference>
<dbReference type="RefSeq" id="NP_001340201.1">
    <molecule id="Q9NUQ9-2"/>
    <property type="nucleotide sequence ID" value="NM_001353272.1"/>
</dbReference>
<dbReference type="RefSeq" id="NP_001340202.1">
    <molecule id="Q9NUQ9-2"/>
    <property type="nucleotide sequence ID" value="NM_001353273.1"/>
</dbReference>
<dbReference type="RefSeq" id="NP_001340203.1">
    <molecule id="Q9NUQ9-2"/>
    <property type="nucleotide sequence ID" value="NM_001353274.1"/>
</dbReference>
<dbReference type="RefSeq" id="NP_001340204.1">
    <molecule id="Q9NUQ9-2"/>
    <property type="nucleotide sequence ID" value="NM_001353275.1"/>
</dbReference>
<dbReference type="RefSeq" id="NP_001340205.1">
    <molecule id="Q9NUQ9-2"/>
    <property type="nucleotide sequence ID" value="NM_001353276.2"/>
</dbReference>
<dbReference type="RefSeq" id="NP_001340206.1">
    <molecule id="Q9NUQ9-2"/>
    <property type="nucleotide sequence ID" value="NM_001353277.1"/>
</dbReference>
<dbReference type="RefSeq" id="NP_001340207.1">
    <molecule id="Q9NUQ9-2"/>
    <property type="nucleotide sequence ID" value="NM_001353278.1"/>
</dbReference>
<dbReference type="RefSeq" id="NP_001340208.1">
    <molecule id="Q9NUQ9-2"/>
    <property type="nucleotide sequence ID" value="NM_001353279.1"/>
</dbReference>
<dbReference type="RefSeq" id="NP_001340209.1">
    <molecule id="Q9NUQ9-2"/>
    <property type="nucleotide sequence ID" value="NM_001353280.1"/>
</dbReference>
<dbReference type="RefSeq" id="NP_001340210.1">
    <molecule id="Q9NUQ9-2"/>
    <property type="nucleotide sequence ID" value="NM_001353281.1"/>
</dbReference>
<dbReference type="RefSeq" id="NP_001340211.1">
    <molecule id="Q9NUQ9-2"/>
    <property type="nucleotide sequence ID" value="NM_001353282.2"/>
</dbReference>
<dbReference type="RefSeq" id="NP_001340212.1">
    <molecule id="Q9NUQ9-2"/>
    <property type="nucleotide sequence ID" value="NM_001353283.2"/>
</dbReference>
<dbReference type="RefSeq" id="NP_001340213.1">
    <molecule id="Q9NUQ9-2"/>
    <property type="nucleotide sequence ID" value="NM_001353284.2"/>
</dbReference>
<dbReference type="RefSeq" id="NP_001340214.1">
    <molecule id="Q9NUQ9-2"/>
    <property type="nucleotide sequence ID" value="NM_001353285.2"/>
</dbReference>
<dbReference type="RefSeq" id="NP_001340215.1">
    <molecule id="Q9NUQ9-2"/>
    <property type="nucleotide sequence ID" value="NM_001353286.2"/>
</dbReference>
<dbReference type="RefSeq" id="NP_001340216.1">
    <molecule id="Q9NUQ9-2"/>
    <property type="nucleotide sequence ID" value="NM_001353287.2"/>
</dbReference>
<dbReference type="RefSeq" id="NP_001340217.1">
    <molecule id="Q9NUQ9-2"/>
    <property type="nucleotide sequence ID" value="NM_001353288.2"/>
</dbReference>
<dbReference type="RefSeq" id="NP_001340218.1">
    <molecule id="Q9NUQ9-2"/>
    <property type="nucleotide sequence ID" value="NM_001353289.2"/>
</dbReference>
<dbReference type="RefSeq" id="NP_001340219.1">
    <molecule id="Q9NUQ9-2"/>
    <property type="nucleotide sequence ID" value="NM_001353290.2"/>
</dbReference>
<dbReference type="RefSeq" id="NP_001340220.1">
    <molecule id="Q9NUQ9-2"/>
    <property type="nucleotide sequence ID" value="NM_001353291.2"/>
</dbReference>
<dbReference type="RefSeq" id="NP_001340221.1">
    <molecule id="Q9NUQ9-2"/>
    <property type="nucleotide sequence ID" value="NM_001353292.2"/>
</dbReference>
<dbReference type="RefSeq" id="NP_001340222.1">
    <molecule id="Q9NUQ9-2"/>
    <property type="nucleotide sequence ID" value="NM_001353293.2"/>
</dbReference>
<dbReference type="RefSeq" id="NP_001340223.1">
    <molecule id="Q9NUQ9-2"/>
    <property type="nucleotide sequence ID" value="NM_001353294.2"/>
</dbReference>
<dbReference type="RefSeq" id="NP_001340224.1">
    <molecule id="Q9NUQ9-2"/>
    <property type="nucleotide sequence ID" value="NM_001353295.2"/>
</dbReference>
<dbReference type="RefSeq" id="NP_001340225.1">
    <molecule id="Q9NUQ9-2"/>
    <property type="nucleotide sequence ID" value="NM_001353296.2"/>
</dbReference>
<dbReference type="RefSeq" id="NP_001340226.1">
    <molecule id="Q9NUQ9-2"/>
    <property type="nucleotide sequence ID" value="NM_001353297.2"/>
</dbReference>
<dbReference type="RefSeq" id="NP_001340227.1">
    <molecule id="Q9NUQ9-2"/>
    <property type="nucleotide sequence ID" value="NM_001353298.2"/>
</dbReference>
<dbReference type="RefSeq" id="NP_001340228.1">
    <molecule id="Q9NUQ9-2"/>
    <property type="nucleotide sequence ID" value="NM_001353299.2"/>
</dbReference>
<dbReference type="RefSeq" id="NP_001340229.1">
    <molecule id="Q9NUQ9-2"/>
    <property type="nucleotide sequence ID" value="NM_001353300.2"/>
</dbReference>
<dbReference type="RefSeq" id="NP_001340230.1">
    <molecule id="Q9NUQ9-2"/>
    <property type="nucleotide sequence ID" value="NM_001353301.2"/>
</dbReference>
<dbReference type="RefSeq" id="NP_057707.3">
    <molecule id="Q9NUQ9-1"/>
    <property type="nucleotide sequence ID" value="NM_016623.4"/>
</dbReference>
<dbReference type="RefSeq" id="XP_011515410.1">
    <property type="nucleotide sequence ID" value="XM_011517108.2"/>
</dbReference>
<dbReference type="RefSeq" id="XP_011515411.1">
    <property type="nucleotide sequence ID" value="XM_011517109.2"/>
</dbReference>
<dbReference type="RefSeq" id="XP_011515412.1">
    <property type="nucleotide sequence ID" value="XM_011517110.2"/>
</dbReference>
<dbReference type="RefSeq" id="XP_011515413.1">
    <property type="nucleotide sequence ID" value="XM_011517111.2"/>
</dbReference>
<dbReference type="RefSeq" id="XP_011515414.1">
    <property type="nucleotide sequence ID" value="XM_011517112.2"/>
</dbReference>
<dbReference type="RefSeq" id="XP_011515415.1">
    <property type="nucleotide sequence ID" value="XM_011517113.2"/>
</dbReference>
<dbReference type="RefSeq" id="XP_011515416.1">
    <property type="nucleotide sequence ID" value="XM_011517114.2"/>
</dbReference>
<dbReference type="RefSeq" id="XP_011515417.1">
    <property type="nucleotide sequence ID" value="XM_011517115.2"/>
</dbReference>
<dbReference type="RefSeq" id="XP_011515423.1">
    <property type="nucleotide sequence ID" value="XM_011517121.2"/>
</dbReference>
<dbReference type="RefSeq" id="XP_011515424.1">
    <property type="nucleotide sequence ID" value="XM_011517122.2"/>
</dbReference>
<dbReference type="RefSeq" id="XP_011515425.1">
    <property type="nucleotide sequence ID" value="XM_011517123.2"/>
</dbReference>
<dbReference type="RefSeq" id="XP_011515426.1">
    <property type="nucleotide sequence ID" value="XM_011517124.2"/>
</dbReference>
<dbReference type="RefSeq" id="XP_011515427.1">
    <property type="nucleotide sequence ID" value="XM_011517125.2"/>
</dbReference>
<dbReference type="RefSeq" id="XP_016869028.1">
    <property type="nucleotide sequence ID" value="XM_017013539.1"/>
</dbReference>
<dbReference type="RefSeq" id="XP_016869029.1">
    <property type="nucleotide sequence ID" value="XM_017013540.1"/>
</dbReference>
<dbReference type="RefSeq" id="XP_016869030.1">
    <property type="nucleotide sequence ID" value="XM_017013541.1"/>
</dbReference>
<dbReference type="RefSeq" id="XP_016869031.1">
    <property type="nucleotide sequence ID" value="XM_017013542.1"/>
</dbReference>
<dbReference type="RefSeq" id="XP_016869032.1">
    <property type="nucleotide sequence ID" value="XM_017013543.1"/>
</dbReference>
<dbReference type="RefSeq" id="XP_016869033.1">
    <property type="nucleotide sequence ID" value="XM_017013544.1"/>
</dbReference>
<dbReference type="RefSeq" id="XP_016869034.1">
    <property type="nucleotide sequence ID" value="XM_017013545.1"/>
</dbReference>
<dbReference type="RefSeq" id="XP_016869035.1">
    <property type="nucleotide sequence ID" value="XM_017013546.1"/>
</dbReference>
<dbReference type="RefSeq" id="XP_016869036.1">
    <property type="nucleotide sequence ID" value="XM_017013547.1"/>
</dbReference>
<dbReference type="RefSeq" id="XP_016869037.1">
    <property type="nucleotide sequence ID" value="XM_017013548.1"/>
</dbReference>
<dbReference type="RefSeq" id="XP_016869038.1">
    <property type="nucleotide sequence ID" value="XM_017013549.1"/>
</dbReference>
<dbReference type="RefSeq" id="XP_016869039.1">
    <property type="nucleotide sequence ID" value="XM_017013550.1"/>
</dbReference>
<dbReference type="RefSeq" id="XP_016869040.1">
    <property type="nucleotide sequence ID" value="XM_017013551.1"/>
</dbReference>
<dbReference type="RefSeq" id="XP_016869047.1">
    <property type="nucleotide sequence ID" value="XM_017013558.1"/>
</dbReference>
<dbReference type="RefSeq" id="XP_016869048.1">
    <property type="nucleotide sequence ID" value="XM_017013559.1"/>
</dbReference>
<dbReference type="RefSeq" id="XP_016869049.1">
    <property type="nucleotide sequence ID" value="XM_017013560.1"/>
</dbReference>
<dbReference type="RefSeq" id="XP_016869050.1">
    <property type="nucleotide sequence ID" value="XM_017013561.1"/>
</dbReference>
<dbReference type="RefSeq" id="XP_016869051.1">
    <property type="nucleotide sequence ID" value="XM_017013562.1"/>
</dbReference>
<dbReference type="RefSeq" id="XP_024302948.1">
    <molecule id="Q9NUQ9-1"/>
    <property type="nucleotide sequence ID" value="XM_024447180.2"/>
</dbReference>
<dbReference type="RefSeq" id="XP_047277812.1">
    <molecule id="Q9NUQ9-1"/>
    <property type="nucleotide sequence ID" value="XM_047421856.1"/>
</dbReference>
<dbReference type="RefSeq" id="XP_047277813.1">
    <molecule id="Q9NUQ9-1"/>
    <property type="nucleotide sequence ID" value="XM_047421857.1"/>
</dbReference>
<dbReference type="RefSeq" id="XP_047277815.1">
    <molecule id="Q9NUQ9-1"/>
    <property type="nucleotide sequence ID" value="XM_047421859.1"/>
</dbReference>
<dbReference type="RefSeq" id="XP_054216612.1">
    <molecule id="Q9NUQ9-1"/>
    <property type="nucleotide sequence ID" value="XM_054360637.1"/>
</dbReference>
<dbReference type="RefSeq" id="XP_054216613.1">
    <molecule id="Q9NUQ9-1"/>
    <property type="nucleotide sequence ID" value="XM_054360638.1"/>
</dbReference>
<dbReference type="RefSeq" id="XP_054216614.1">
    <molecule id="Q9NUQ9-1"/>
    <property type="nucleotide sequence ID" value="XM_054360639.1"/>
</dbReference>
<dbReference type="RefSeq" id="XP_054216615.1">
    <molecule id="Q9NUQ9-1"/>
    <property type="nucleotide sequence ID" value="XM_054360640.1"/>
</dbReference>
<dbReference type="PDB" id="7AJK">
    <property type="method" value="X-ray"/>
    <property type="resolution" value="3.10 A"/>
    <property type="chains" value="CCC=1-324"/>
</dbReference>
<dbReference type="PDBsum" id="7AJK"/>
<dbReference type="SMR" id="Q9NUQ9"/>
<dbReference type="BioGRID" id="119617">
    <property type="interactions" value="109"/>
</dbReference>
<dbReference type="FunCoup" id="Q9NUQ9">
    <property type="interactions" value="1295"/>
</dbReference>
<dbReference type="IntAct" id="Q9NUQ9">
    <property type="interactions" value="60"/>
</dbReference>
<dbReference type="MINT" id="Q9NUQ9"/>
<dbReference type="STRING" id="9606.ENSP00000429150"/>
<dbReference type="GlyGen" id="Q9NUQ9">
    <property type="glycosylation" value="1 site, 1 O-linked glycan (1 site)"/>
</dbReference>
<dbReference type="iPTMnet" id="Q9NUQ9"/>
<dbReference type="MetOSite" id="Q9NUQ9"/>
<dbReference type="PhosphoSitePlus" id="Q9NUQ9"/>
<dbReference type="SwissPalm" id="Q9NUQ9"/>
<dbReference type="BioMuta" id="FAM49B"/>
<dbReference type="DMDM" id="52782794"/>
<dbReference type="jPOST" id="Q9NUQ9"/>
<dbReference type="MassIVE" id="Q9NUQ9"/>
<dbReference type="PaxDb" id="9606-ENSP00000429150"/>
<dbReference type="PeptideAtlas" id="Q9NUQ9"/>
<dbReference type="ProteomicsDB" id="82714">
    <molecule id="Q9NUQ9-1"/>
</dbReference>
<dbReference type="ProteomicsDB" id="82891"/>
<dbReference type="Pumba" id="Q9NUQ9"/>
<dbReference type="Antibodypedia" id="2198">
    <property type="antibodies" value="77 antibodies from 21 providers"/>
</dbReference>
<dbReference type="DNASU" id="51571"/>
<dbReference type="Ensembl" id="ENST00000401979.6">
    <molecule id="Q9NUQ9-1"/>
    <property type="protein sequence ID" value="ENSP00000384880.2"/>
    <property type="gene ID" value="ENSG00000153310.22"/>
</dbReference>
<dbReference type="Ensembl" id="ENST00000517654.5">
    <molecule id="Q9NUQ9-1"/>
    <property type="protein sequence ID" value="ENSP00000430674.1"/>
    <property type="gene ID" value="ENSG00000153310.22"/>
</dbReference>
<dbReference type="Ensembl" id="ENST00000519110.5">
    <molecule id="Q9NUQ9-1"/>
    <property type="protein sequence ID" value="ENSP00000429078.1"/>
    <property type="gene ID" value="ENSG00000153310.22"/>
</dbReference>
<dbReference type="Ensembl" id="ENST00000519540.5">
    <molecule id="Q9NUQ9-1"/>
    <property type="protein sequence ID" value="ENSP00000429499.1"/>
    <property type="gene ID" value="ENSG00000153310.22"/>
</dbReference>
<dbReference type="Ensembl" id="ENST00000519824.6">
    <molecule id="Q9NUQ9-1"/>
    <property type="protein sequence ID" value="ENSP00000429150.1"/>
    <property type="gene ID" value="ENSG00000153310.22"/>
</dbReference>
<dbReference type="Ensembl" id="ENST00000522250.5">
    <molecule id="Q9NUQ9-2"/>
    <property type="protein sequence ID" value="ENSP00000429978.1"/>
    <property type="gene ID" value="ENSG00000153310.22"/>
</dbReference>
<dbReference type="Ensembl" id="ENST00000522746.5">
    <molecule id="Q9NUQ9-1"/>
    <property type="protein sequence ID" value="ENSP00000428117.1"/>
    <property type="gene ID" value="ENSG00000153310.22"/>
</dbReference>
<dbReference type="Ensembl" id="ENST00000522941.5">
    <molecule id="Q9NUQ9-2"/>
    <property type="protein sequence ID" value="ENSP00000430433.1"/>
    <property type="gene ID" value="ENSG00000153310.22"/>
</dbReference>
<dbReference type="Ensembl" id="ENST00000523509.5">
    <molecule id="Q9NUQ9-1"/>
    <property type="protein sequence ID" value="ENSP00000429802.1"/>
    <property type="gene ID" value="ENSG00000153310.22"/>
</dbReference>
<dbReference type="Ensembl" id="ENST00000694912.1">
    <molecule id="Q9NUQ9-1"/>
    <property type="protein sequence ID" value="ENSP00000511587.1"/>
    <property type="gene ID" value="ENSG00000153310.22"/>
</dbReference>
<dbReference type="GeneID" id="51571"/>
<dbReference type="KEGG" id="hsa:51571"/>
<dbReference type="MANE-Select" id="ENST00000694912.1">
    <property type="protein sequence ID" value="ENSP00000511587.1"/>
    <property type="RefSeq nucleotide sequence ID" value="NM_001353258.2"/>
    <property type="RefSeq protein sequence ID" value="NP_001340187.1"/>
</dbReference>
<dbReference type="UCSC" id="uc003yss.5">
    <molecule id="Q9NUQ9-1"/>
    <property type="organism name" value="human"/>
</dbReference>
<dbReference type="AGR" id="HGNC:25216"/>
<dbReference type="CTD" id="51571"/>
<dbReference type="DisGeNET" id="51571"/>
<dbReference type="GeneCards" id="CYRIB"/>
<dbReference type="HGNC" id="HGNC:25216">
    <property type="gene designation" value="CYRIB"/>
</dbReference>
<dbReference type="HPA" id="ENSG00000153310">
    <property type="expression patterns" value="Tissue enhanced (bone)"/>
</dbReference>
<dbReference type="MIM" id="617978">
    <property type="type" value="gene"/>
</dbReference>
<dbReference type="neXtProt" id="NX_Q9NUQ9"/>
<dbReference type="OpenTargets" id="ENSG00000153310"/>
<dbReference type="VEuPathDB" id="HostDB:ENSG00000153310"/>
<dbReference type="eggNOG" id="KOG3951">
    <property type="taxonomic scope" value="Eukaryota"/>
</dbReference>
<dbReference type="GeneTree" id="ENSGT00390000015159"/>
<dbReference type="HOGENOM" id="CLU_056470_0_0_1"/>
<dbReference type="InParanoid" id="Q9NUQ9"/>
<dbReference type="OMA" id="EYRSRFN"/>
<dbReference type="OrthoDB" id="60973at2759"/>
<dbReference type="PAN-GO" id="Q9NUQ9">
    <property type="GO annotations" value="1 GO annotation based on evolutionary models"/>
</dbReference>
<dbReference type="PhylomeDB" id="Q9NUQ9"/>
<dbReference type="TreeFam" id="TF314541"/>
<dbReference type="PathwayCommons" id="Q9NUQ9"/>
<dbReference type="Reactome" id="R-HSA-114608">
    <property type="pathway name" value="Platelet degranulation"/>
</dbReference>
<dbReference type="SignaLink" id="Q9NUQ9"/>
<dbReference type="BioGRID-ORCS" id="51571">
    <property type="hits" value="55 hits in 1167 CRISPR screens"/>
</dbReference>
<dbReference type="CD-CODE" id="FB4E32DD">
    <property type="entry name" value="Presynaptic clusters and postsynaptic densities"/>
</dbReference>
<dbReference type="ChiTaRS" id="FAM49B">
    <property type="organism name" value="human"/>
</dbReference>
<dbReference type="GenomeRNAi" id="51571"/>
<dbReference type="Pharos" id="Q9NUQ9">
    <property type="development level" value="Tbio"/>
</dbReference>
<dbReference type="PRO" id="PR:Q9NUQ9"/>
<dbReference type="Proteomes" id="UP000005640">
    <property type="component" value="Chromosome 8"/>
</dbReference>
<dbReference type="RNAct" id="Q9NUQ9">
    <property type="molecule type" value="protein"/>
</dbReference>
<dbReference type="Bgee" id="ENSG00000153310">
    <property type="expression patterns" value="Expressed in monocyte and 206 other cell types or tissues"/>
</dbReference>
<dbReference type="ExpressionAtlas" id="Q9NUQ9">
    <property type="expression patterns" value="baseline and differential"/>
</dbReference>
<dbReference type="GO" id="GO:0005929">
    <property type="term" value="C:cilium"/>
    <property type="evidence" value="ECO:0000250"/>
    <property type="project" value="UniProtKB"/>
</dbReference>
<dbReference type="GO" id="GO:0070062">
    <property type="term" value="C:extracellular exosome"/>
    <property type="evidence" value="ECO:0007005"/>
    <property type="project" value="UniProtKB"/>
</dbReference>
<dbReference type="GO" id="GO:0005576">
    <property type="term" value="C:extracellular region"/>
    <property type="evidence" value="ECO:0000304"/>
    <property type="project" value="Reactome"/>
</dbReference>
<dbReference type="GO" id="GO:0016020">
    <property type="term" value="C:membrane"/>
    <property type="evidence" value="ECO:0007669"/>
    <property type="project" value="UniProtKB-SubCell"/>
</dbReference>
<dbReference type="GO" id="GO:0005739">
    <property type="term" value="C:mitochondrion"/>
    <property type="evidence" value="ECO:0000314"/>
    <property type="project" value="UniProtKB"/>
</dbReference>
<dbReference type="GO" id="GO:0031093">
    <property type="term" value="C:platelet alpha granule lumen"/>
    <property type="evidence" value="ECO:0000304"/>
    <property type="project" value="Reactome"/>
</dbReference>
<dbReference type="GO" id="GO:0023030">
    <property type="term" value="F:MHC class Ib protein binding, via antigen binding groove"/>
    <property type="evidence" value="ECO:0000250"/>
    <property type="project" value="UniProtKB"/>
</dbReference>
<dbReference type="GO" id="GO:0031267">
    <property type="term" value="F:small GTPase binding"/>
    <property type="evidence" value="ECO:0000353"/>
    <property type="project" value="UniProtKB"/>
</dbReference>
<dbReference type="GO" id="GO:0071219">
    <property type="term" value="P:cellular response to molecule of bacterial origin"/>
    <property type="evidence" value="ECO:0000315"/>
    <property type="project" value="UniProtKB"/>
</dbReference>
<dbReference type="GO" id="GO:0030837">
    <property type="term" value="P:negative regulation of actin filament polymerization"/>
    <property type="evidence" value="ECO:0000315"/>
    <property type="project" value="UniProtKB"/>
</dbReference>
<dbReference type="GO" id="GO:0051058">
    <property type="term" value="P:negative regulation of small GTPase mediated signal transduction"/>
    <property type="evidence" value="ECO:0000315"/>
    <property type="project" value="UniProtKB"/>
</dbReference>
<dbReference type="GO" id="GO:2000568">
    <property type="term" value="P:positive regulation of memory T cell activation"/>
    <property type="evidence" value="ECO:0000250"/>
    <property type="project" value="UniProtKB"/>
</dbReference>
<dbReference type="GO" id="GO:0050870">
    <property type="term" value="P:positive regulation of T cell activation"/>
    <property type="evidence" value="ECO:0000250"/>
    <property type="project" value="UniProtKB"/>
</dbReference>
<dbReference type="GO" id="GO:0001916">
    <property type="term" value="P:positive regulation of T cell mediated cytotoxicity"/>
    <property type="evidence" value="ECO:0000250"/>
    <property type="project" value="UniProtKB"/>
</dbReference>
<dbReference type="GO" id="GO:0032729">
    <property type="term" value="P:positive regulation of type II interferon production"/>
    <property type="evidence" value="ECO:0000250"/>
    <property type="project" value="UniProtKB"/>
</dbReference>
<dbReference type="GO" id="GO:0030334">
    <property type="term" value="P:regulation of cell migration"/>
    <property type="evidence" value="ECO:0000315"/>
    <property type="project" value="UniProtKB"/>
</dbReference>
<dbReference type="GO" id="GO:0050920">
    <property type="term" value="P:regulation of chemotaxis"/>
    <property type="evidence" value="ECO:0000315"/>
    <property type="project" value="UniProtKB"/>
</dbReference>
<dbReference type="GO" id="GO:2000114">
    <property type="term" value="P:regulation of establishment of cell polarity"/>
    <property type="evidence" value="ECO:0000315"/>
    <property type="project" value="UniProtKB"/>
</dbReference>
<dbReference type="GO" id="GO:0090140">
    <property type="term" value="P:regulation of mitochondrial fission"/>
    <property type="evidence" value="ECO:0000315"/>
    <property type="project" value="UniProtKB"/>
</dbReference>
<dbReference type="InterPro" id="IPR039789">
    <property type="entry name" value="CYRI"/>
</dbReference>
<dbReference type="InterPro" id="IPR009828">
    <property type="entry name" value="CYRIA/CYRIB_Rac1-bd"/>
</dbReference>
<dbReference type="PANTHER" id="PTHR12422">
    <property type="entry name" value="GH09096P"/>
    <property type="match status" value="1"/>
</dbReference>
<dbReference type="Pfam" id="PF07159">
    <property type="entry name" value="CYRIA-B_Rac1-bd"/>
    <property type="match status" value="1"/>
</dbReference>
<keyword id="KW-0002">3D-structure</keyword>
<keyword id="KW-0025">Alternative splicing</keyword>
<keyword id="KW-1017">Isopeptide bond</keyword>
<keyword id="KW-0449">Lipoprotein</keyword>
<keyword id="KW-0472">Membrane</keyword>
<keyword id="KW-0496">Mitochondrion</keyword>
<keyword id="KW-0519">Myristate</keyword>
<keyword id="KW-1267">Proteomics identification</keyword>
<keyword id="KW-1185">Reference proteome</keyword>
<keyword id="KW-0832">Ubl conjugation</keyword>
<proteinExistence type="evidence at protein level"/>
<gene>
    <name evidence="9 12" type="primary">CYRIB</name>
    <name evidence="10" type="synonym">CYRI</name>
    <name type="synonym">FAM49B</name>
    <name type="ORF">BM-009</name>
</gene>
<protein>
    <recommendedName>
        <fullName evidence="11">CYFIP-related Rac1 interactor B</fullName>
    </recommendedName>
    <alternativeName>
        <fullName>L1</fullName>
    </alternativeName>
</protein>
<reference key="1">
    <citation type="journal article" date="2000" name="Genome Res.">
        <title>Cloning and functional analysis of cDNAs with open reading frames for 300 previously undefined genes expressed in CD34+ hematopoietic stem/progenitor cells.</title>
        <authorList>
            <person name="Zhang Q.-H."/>
            <person name="Ye M."/>
            <person name="Wu X.-Y."/>
            <person name="Ren S.-X."/>
            <person name="Zhao M."/>
            <person name="Zhao C.-J."/>
            <person name="Fu G."/>
            <person name="Shen Y."/>
            <person name="Fan H.-Y."/>
            <person name="Lu G."/>
            <person name="Zhong M."/>
            <person name="Xu X.-R."/>
            <person name="Han Z.-G."/>
            <person name="Zhang J.-W."/>
            <person name="Tao J."/>
            <person name="Huang Q.-H."/>
            <person name="Zhou J."/>
            <person name="Hu G.-X."/>
            <person name="Gu J."/>
            <person name="Chen S.-J."/>
            <person name="Chen Z."/>
        </authorList>
    </citation>
    <scope>NUCLEOTIDE SEQUENCE [LARGE SCALE MRNA] (ISOFORM 1)</scope>
    <source>
        <tissue>Bone marrow</tissue>
    </source>
</reference>
<reference key="2">
    <citation type="submission" date="2004-04" db="EMBL/GenBank/DDBJ databases">
        <title>Expression profiling in NSCLC.</title>
        <authorList>
            <person name="Petroziello J."/>
            <person name="Carter P."/>
        </authorList>
    </citation>
    <scope>NUCLEOTIDE SEQUENCE [MRNA] (ISOFORM 1)</scope>
    <scope>VARIANT LYS-169</scope>
</reference>
<reference key="3">
    <citation type="journal article" date="2004" name="Nat. Genet.">
        <title>Complete sequencing and characterization of 21,243 full-length human cDNAs.</title>
        <authorList>
            <person name="Ota T."/>
            <person name="Suzuki Y."/>
            <person name="Nishikawa T."/>
            <person name="Otsuki T."/>
            <person name="Sugiyama T."/>
            <person name="Irie R."/>
            <person name="Wakamatsu A."/>
            <person name="Hayashi K."/>
            <person name="Sato H."/>
            <person name="Nagai K."/>
            <person name="Kimura K."/>
            <person name="Makita H."/>
            <person name="Sekine M."/>
            <person name="Obayashi M."/>
            <person name="Nishi T."/>
            <person name="Shibahara T."/>
            <person name="Tanaka T."/>
            <person name="Ishii S."/>
            <person name="Yamamoto J."/>
            <person name="Saito K."/>
            <person name="Kawai Y."/>
            <person name="Isono Y."/>
            <person name="Nakamura Y."/>
            <person name="Nagahari K."/>
            <person name="Murakami K."/>
            <person name="Yasuda T."/>
            <person name="Iwayanagi T."/>
            <person name="Wagatsuma M."/>
            <person name="Shiratori A."/>
            <person name="Sudo H."/>
            <person name="Hosoiri T."/>
            <person name="Kaku Y."/>
            <person name="Kodaira H."/>
            <person name="Kondo H."/>
            <person name="Sugawara M."/>
            <person name="Takahashi M."/>
            <person name="Kanda K."/>
            <person name="Yokoi T."/>
            <person name="Furuya T."/>
            <person name="Kikkawa E."/>
            <person name="Omura Y."/>
            <person name="Abe K."/>
            <person name="Kamihara K."/>
            <person name="Katsuta N."/>
            <person name="Sato K."/>
            <person name="Tanikawa M."/>
            <person name="Yamazaki M."/>
            <person name="Ninomiya K."/>
            <person name="Ishibashi T."/>
            <person name="Yamashita H."/>
            <person name="Murakawa K."/>
            <person name="Fujimori K."/>
            <person name="Tanai H."/>
            <person name="Kimata M."/>
            <person name="Watanabe M."/>
            <person name="Hiraoka S."/>
            <person name="Chiba Y."/>
            <person name="Ishida S."/>
            <person name="Ono Y."/>
            <person name="Takiguchi S."/>
            <person name="Watanabe S."/>
            <person name="Yosida M."/>
            <person name="Hotuta T."/>
            <person name="Kusano J."/>
            <person name="Kanehori K."/>
            <person name="Takahashi-Fujii A."/>
            <person name="Hara H."/>
            <person name="Tanase T.-O."/>
            <person name="Nomura Y."/>
            <person name="Togiya S."/>
            <person name="Komai F."/>
            <person name="Hara R."/>
            <person name="Takeuchi K."/>
            <person name="Arita M."/>
            <person name="Imose N."/>
            <person name="Musashino K."/>
            <person name="Yuuki H."/>
            <person name="Oshima A."/>
            <person name="Sasaki N."/>
            <person name="Aotsuka S."/>
            <person name="Yoshikawa Y."/>
            <person name="Matsunawa H."/>
            <person name="Ichihara T."/>
            <person name="Shiohata N."/>
            <person name="Sano S."/>
            <person name="Moriya S."/>
            <person name="Momiyama H."/>
            <person name="Satoh N."/>
            <person name="Takami S."/>
            <person name="Terashima Y."/>
            <person name="Suzuki O."/>
            <person name="Nakagawa S."/>
            <person name="Senoh A."/>
            <person name="Mizoguchi H."/>
            <person name="Goto Y."/>
            <person name="Shimizu F."/>
            <person name="Wakebe H."/>
            <person name="Hishigaki H."/>
            <person name="Watanabe T."/>
            <person name="Sugiyama A."/>
            <person name="Takemoto M."/>
            <person name="Kawakami B."/>
            <person name="Yamazaki M."/>
            <person name="Watanabe K."/>
            <person name="Kumagai A."/>
            <person name="Itakura S."/>
            <person name="Fukuzumi Y."/>
            <person name="Fujimori Y."/>
            <person name="Komiyama M."/>
            <person name="Tashiro H."/>
            <person name="Tanigami A."/>
            <person name="Fujiwara T."/>
            <person name="Ono T."/>
            <person name="Yamada K."/>
            <person name="Fujii Y."/>
            <person name="Ozaki K."/>
            <person name="Hirao M."/>
            <person name="Ohmori Y."/>
            <person name="Kawabata A."/>
            <person name="Hikiji T."/>
            <person name="Kobatake N."/>
            <person name="Inagaki H."/>
            <person name="Ikema Y."/>
            <person name="Okamoto S."/>
            <person name="Okitani R."/>
            <person name="Kawakami T."/>
            <person name="Noguchi S."/>
            <person name="Itoh T."/>
            <person name="Shigeta K."/>
            <person name="Senba T."/>
            <person name="Matsumura K."/>
            <person name="Nakajima Y."/>
            <person name="Mizuno T."/>
            <person name="Morinaga M."/>
            <person name="Sasaki M."/>
            <person name="Togashi T."/>
            <person name="Oyama M."/>
            <person name="Hata H."/>
            <person name="Watanabe M."/>
            <person name="Komatsu T."/>
            <person name="Mizushima-Sugano J."/>
            <person name="Satoh T."/>
            <person name="Shirai Y."/>
            <person name="Takahashi Y."/>
            <person name="Nakagawa K."/>
            <person name="Okumura K."/>
            <person name="Nagase T."/>
            <person name="Nomura N."/>
            <person name="Kikuchi H."/>
            <person name="Masuho Y."/>
            <person name="Yamashita R."/>
            <person name="Nakai K."/>
            <person name="Yada T."/>
            <person name="Nakamura Y."/>
            <person name="Ohara O."/>
            <person name="Isogai T."/>
            <person name="Sugano S."/>
        </authorList>
    </citation>
    <scope>NUCLEOTIDE SEQUENCE [LARGE SCALE MRNA] (ISOFORMS 1 AND 2)</scope>
    <source>
        <tissue>Placenta</tissue>
    </source>
</reference>
<reference key="4">
    <citation type="journal article" date="2006" name="Nature">
        <title>DNA sequence and analysis of human chromosome 8.</title>
        <authorList>
            <person name="Nusbaum C."/>
            <person name="Mikkelsen T.S."/>
            <person name="Zody M.C."/>
            <person name="Asakawa S."/>
            <person name="Taudien S."/>
            <person name="Garber M."/>
            <person name="Kodira C.D."/>
            <person name="Schueler M.G."/>
            <person name="Shimizu A."/>
            <person name="Whittaker C.A."/>
            <person name="Chang J.L."/>
            <person name="Cuomo C.A."/>
            <person name="Dewar K."/>
            <person name="FitzGerald M.G."/>
            <person name="Yang X."/>
            <person name="Allen N.R."/>
            <person name="Anderson S."/>
            <person name="Asakawa T."/>
            <person name="Blechschmidt K."/>
            <person name="Bloom T."/>
            <person name="Borowsky M.L."/>
            <person name="Butler J."/>
            <person name="Cook A."/>
            <person name="Corum B."/>
            <person name="DeArellano K."/>
            <person name="DeCaprio D."/>
            <person name="Dooley K.T."/>
            <person name="Dorris L. III"/>
            <person name="Engels R."/>
            <person name="Gloeckner G."/>
            <person name="Hafez N."/>
            <person name="Hagopian D.S."/>
            <person name="Hall J.L."/>
            <person name="Ishikawa S.K."/>
            <person name="Jaffe D.B."/>
            <person name="Kamat A."/>
            <person name="Kudoh J."/>
            <person name="Lehmann R."/>
            <person name="Lokitsang T."/>
            <person name="Macdonald P."/>
            <person name="Major J.E."/>
            <person name="Matthews C.D."/>
            <person name="Mauceli E."/>
            <person name="Menzel U."/>
            <person name="Mihalev A.H."/>
            <person name="Minoshima S."/>
            <person name="Murayama Y."/>
            <person name="Naylor J.W."/>
            <person name="Nicol R."/>
            <person name="Nguyen C."/>
            <person name="O'Leary S.B."/>
            <person name="O'Neill K."/>
            <person name="Parker S.C.J."/>
            <person name="Polley A."/>
            <person name="Raymond C.K."/>
            <person name="Reichwald K."/>
            <person name="Rodriguez J."/>
            <person name="Sasaki T."/>
            <person name="Schilhabel M."/>
            <person name="Siddiqui R."/>
            <person name="Smith C.L."/>
            <person name="Sneddon T.P."/>
            <person name="Talamas J.A."/>
            <person name="Tenzin P."/>
            <person name="Topham K."/>
            <person name="Venkataraman V."/>
            <person name="Wen G."/>
            <person name="Yamazaki S."/>
            <person name="Young S.K."/>
            <person name="Zeng Q."/>
            <person name="Zimmer A.R."/>
            <person name="Rosenthal A."/>
            <person name="Birren B.W."/>
            <person name="Platzer M."/>
            <person name="Shimizu N."/>
            <person name="Lander E.S."/>
        </authorList>
    </citation>
    <scope>NUCLEOTIDE SEQUENCE [LARGE SCALE GENOMIC DNA]</scope>
</reference>
<reference key="5">
    <citation type="journal article" date="2004" name="Genome Res.">
        <title>The status, quality, and expansion of the NIH full-length cDNA project: the Mammalian Gene Collection (MGC).</title>
        <authorList>
            <consortium name="The MGC Project Team"/>
        </authorList>
    </citation>
    <scope>NUCLEOTIDE SEQUENCE [LARGE SCALE MRNA] (ISOFORM 1)</scope>
    <scope>VARIANT LYS-169</scope>
    <source>
        <tissue>Brain</tissue>
        <tissue>Kidney</tissue>
        <tissue>Lung</tissue>
    </source>
</reference>
<reference key="6">
    <citation type="journal article" date="2011" name="BMC Syst. Biol.">
        <title>Initial characterization of the human central proteome.</title>
        <authorList>
            <person name="Burkard T.R."/>
            <person name="Planyavsky M."/>
            <person name="Kaupe I."/>
            <person name="Breitwieser F.P."/>
            <person name="Buerckstuemmer T."/>
            <person name="Bennett K.L."/>
            <person name="Superti-Furga G."/>
            <person name="Colinge J."/>
        </authorList>
    </citation>
    <scope>IDENTIFICATION BY MASS SPECTROMETRY [LARGE SCALE ANALYSIS]</scope>
</reference>
<reference key="7">
    <citation type="journal article" date="2014" name="Nat. Commun.">
        <title>Global profiling of co- and post-translationally N-myristoylated proteomes in human cells.</title>
        <authorList>
            <person name="Thinon E."/>
            <person name="Serwa R.A."/>
            <person name="Broncel M."/>
            <person name="Brannigan J.A."/>
            <person name="Brassat U."/>
            <person name="Wright M.H."/>
            <person name="Heal W.P."/>
            <person name="Wilkinson A.J."/>
            <person name="Mann D.J."/>
            <person name="Tate E.W."/>
        </authorList>
    </citation>
    <scope>MYRISTOYLATION AT GLY-2</scope>
    <scope>CLEAVAGE OF INITIATOR METHIONINE</scope>
    <scope>IDENTIFICATION BY MASS SPECTROMETRY</scope>
</reference>
<reference key="8">
    <citation type="journal article" date="2018" name="Nat. Cell Biol.">
        <title>Fam49/CYRI interacts with Rac1 and locally suppresses protrusions.</title>
        <authorList>
            <person name="Fort L."/>
            <person name="Batista J.M."/>
            <person name="Thomason P.A."/>
            <person name="Spence H.J."/>
            <person name="Whitelaw J.A."/>
            <person name="Tweedy L."/>
            <person name="Greaves J."/>
            <person name="Martin K.J."/>
            <person name="Anderson K.I."/>
            <person name="Brown P."/>
            <person name="Lilla S."/>
            <person name="Neilson M.P."/>
            <person name="Tafelmeyer P."/>
            <person name="Zanivan S."/>
            <person name="Ismail S."/>
            <person name="Bryant D.M."/>
            <person name="Tomkinson N.C.O."/>
            <person name="Chamberlain L.H."/>
            <person name="Mastick G.S."/>
            <person name="Insall R.H."/>
            <person name="Machesky L.M."/>
        </authorList>
    </citation>
    <scope>MYRISTOYLATION AT GLY-2</scope>
    <scope>FUNCTION</scope>
    <scope>INTERACTION WITH RAC1</scope>
    <scope>MUTAGENESIS OF 160-ARG-ARG-161</scope>
</reference>
<reference key="9">
    <citation type="journal article" date="2018" name="Oncogene">
        <title>FAM49B, a novel regulator of mitochondrial function and integrity that suppresses tumor metastasis.</title>
        <authorList>
            <person name="Chattaragada M.S."/>
            <person name="Riganti C."/>
            <person name="Sassoe M."/>
            <person name="Principe M."/>
            <person name="Santamorena M.M."/>
            <person name="Roux C."/>
            <person name="Curcio C."/>
            <person name="Evangelista A."/>
            <person name="Allavena P."/>
            <person name="Salvia R."/>
            <person name="Rusev B."/>
            <person name="Scarpa A."/>
            <person name="Cappello P."/>
            <person name="Novelli F."/>
        </authorList>
    </citation>
    <scope>FUNCTION</scope>
    <scope>SUBCELLULAR LOCATION</scope>
</reference>
<reference key="10">
    <citation type="journal article" date="2019" name="Nat. Microbiol.">
        <title>CYRI/FAM49B negatively regulates RAC1-driven cytoskeletal remodelling and protects against bacterial infection.</title>
        <authorList>
            <person name="Yuki K.E."/>
            <person name="Marei H."/>
            <person name="Fiskin E."/>
            <person name="Eva M.M."/>
            <person name="Gopal A.A."/>
            <person name="Schwartzentruber J.A."/>
            <person name="Majewski J."/>
            <person name="Cellier M."/>
            <person name="Mandl J.N."/>
            <person name="Vidal S.M."/>
            <person name="Malo D."/>
            <person name="Dikic I."/>
        </authorList>
    </citation>
    <scope>FUNCTION</scope>
    <scope>INTERACTION WITH RAC1</scope>
    <scope>MUTAGENESIS OF PRO-150 AND ARG-161</scope>
    <scope>INDUCTION BY SALMONELLA (MICROBIAL INFECTION)</scope>
    <scope>UBIQUITINATION AT LYS-74</scope>
</reference>
<comment type="function">
    <text evidence="1 4 5 6">Negatively regulates RAC1 signaling and RAC1-driven cytoskeletal remodeling (PubMed:30250061, PubMed:31285585). Regulates chemotaxis, cell migration and epithelial polarization by controlling the polarity, plasticity, duration and extent of protrusions. Limits Rac1 mediated activation of the Scar/WAVE complex, focuses protrusion signals and regulates pseudopod complexity by inhibiting Scar/WAVE-induced actin polymerization (PubMed:30250061). Protects against Salmonella bacterial infection. Attenuates processes such as macropinocytosis, phagocytosis and cell migration and restrict sopE-mediated bacterial entry (PubMed:31285585). Also restricts infection mediated by Mycobacterium tuberculosis and Listeria monocytogenes (By similarity). Involved in the regulation of mitochondrial dynamics and oxidative stress (PubMed:29059164).</text>
</comment>
<comment type="subunit">
    <text evidence="5 6">Interacts with RAC1 (GTP-bound form preferentially).</text>
</comment>
<comment type="interaction">
    <interactant intactId="EBI-1055930">
        <id>Q9NUQ9</id>
    </interactant>
    <interactant intactId="EBI-10988864">
        <id>P46379-2</id>
        <label>BAG6</label>
    </interactant>
    <organismsDiffer>false</organismsDiffer>
    <experiments>3</experiments>
</comment>
<comment type="interaction">
    <interactant intactId="EBI-1055930">
        <id>Q9NUQ9</id>
    </interactant>
    <interactant intactId="EBI-473886">
        <id>O00291</id>
        <label>HIP1</label>
    </interactant>
    <organismsDiffer>false</organismsDiffer>
    <experiments>3</experiments>
</comment>
<comment type="interaction">
    <interactant intactId="EBI-1055930">
        <id>Q9NUQ9</id>
    </interactant>
    <interactant intactId="EBI-948266">
        <id>O14901</id>
        <label>KLF11</label>
    </interactant>
    <organismsDiffer>false</organismsDiffer>
    <experiments>3</experiments>
</comment>
<comment type="interaction">
    <interactant intactId="EBI-1055930">
        <id>Q9NUQ9</id>
    </interactant>
    <interactant intactId="EBI-740897">
        <id>Q9GZT8</id>
        <label>NIF3L1</label>
    </interactant>
    <organismsDiffer>false</organismsDiffer>
    <experiments>3</experiments>
</comment>
<comment type="subcellular location">
    <subcellularLocation>
        <location evidence="11">Membrane</location>
        <topology evidence="11">Lipid-anchor</topology>
    </subcellularLocation>
    <subcellularLocation>
        <location evidence="4">Mitochondrion</location>
    </subcellularLocation>
</comment>
<comment type="alternative products">
    <event type="alternative splicing"/>
    <isoform>
        <id>Q9NUQ9-1</id>
        <name>1</name>
        <sequence type="displayed"/>
    </isoform>
    <isoform>
        <id>Q9NUQ9-2</id>
        <name>2</name>
        <sequence type="described" ref="VSP_056503"/>
    </isoform>
</comment>
<comment type="induction">
    <text evidence="6">Protein levels are negatively regulated by Salmonella.</text>
</comment>
<comment type="PTM">
    <text evidence="6">Ubiquitinated at Lys-74 upon Salmonella bacterial infection.</text>
</comment>
<comment type="similarity">
    <text evidence="11">Belongs to the CYRI family.</text>
</comment>
<comment type="sequence caution" evidence="11">
    <conflict type="frameshift">
        <sequence resource="EMBL-CDS" id="AAF64265"/>
    </conflict>
</comment>
<organism>
    <name type="scientific">Homo sapiens</name>
    <name type="common">Human</name>
    <dbReference type="NCBI Taxonomy" id="9606"/>
    <lineage>
        <taxon>Eukaryota</taxon>
        <taxon>Metazoa</taxon>
        <taxon>Chordata</taxon>
        <taxon>Craniata</taxon>
        <taxon>Vertebrata</taxon>
        <taxon>Euteleostomi</taxon>
        <taxon>Mammalia</taxon>
        <taxon>Eutheria</taxon>
        <taxon>Euarchontoglires</taxon>
        <taxon>Primates</taxon>
        <taxon>Haplorrhini</taxon>
        <taxon>Catarrhini</taxon>
        <taxon>Hominidae</taxon>
        <taxon>Homo</taxon>
    </lineage>
</organism>
<feature type="initiator methionine" description="Removed" evidence="3 5">
    <location>
        <position position="1"/>
    </location>
</feature>
<feature type="chain" id="PRO_0000187060" description="CYFIP-related Rac1 interactor B">
    <location>
        <begin position="2"/>
        <end position="324"/>
    </location>
</feature>
<feature type="lipid moiety-binding region" description="N-myristoyl glycine" evidence="3 5">
    <location>
        <position position="2"/>
    </location>
</feature>
<feature type="cross-link" description="Glycyl lysine isopeptide (Lys-Gly) (interchain with G-Cter in ubiquitin)" evidence="6">
    <location>
        <position position="74"/>
    </location>
</feature>
<feature type="splice variant" id="VSP_056503" description="In isoform 2." evidence="8">
    <location>
        <begin position="1"/>
        <end position="146"/>
    </location>
</feature>
<feature type="sequence variant" id="VAR_019704" evidence="2 7">
    <original>N</original>
    <variation>K</variation>
    <location>
        <position position="169"/>
    </location>
</feature>
<feature type="mutagenesis site" description="No effect on interaction with RAC1. Almost abolishes interaction with RAC1; when associated with D-161." evidence="6">
    <original>P</original>
    <variation>D</variation>
    <location>
        <position position="150"/>
    </location>
</feature>
<feature type="mutagenesis site" description="Abolishes interaction with RAC1." evidence="5">
    <original>RR</original>
    <variation>DD</variation>
    <location>
        <begin position="160"/>
        <end position="161"/>
    </location>
</feature>
<feature type="mutagenesis site" description="Strongly decreases interaction with RAC1. Almost abolishes interaction with RAC1; when associated with D-150." evidence="6">
    <original>R</original>
    <variation>D</variation>
    <location>
        <position position="161"/>
    </location>
</feature>
<evidence type="ECO:0000250" key="1">
    <source>
        <dbReference type="UniProtKB" id="Q921M7"/>
    </source>
</evidence>
<evidence type="ECO:0000269" key="2">
    <source>
    </source>
</evidence>
<evidence type="ECO:0000269" key="3">
    <source>
    </source>
</evidence>
<evidence type="ECO:0000269" key="4">
    <source>
    </source>
</evidence>
<evidence type="ECO:0000269" key="5">
    <source>
    </source>
</evidence>
<evidence type="ECO:0000269" key="6">
    <source>
    </source>
</evidence>
<evidence type="ECO:0000269" key="7">
    <source ref="2"/>
</evidence>
<evidence type="ECO:0000303" key="8">
    <source>
    </source>
</evidence>
<evidence type="ECO:0000303" key="9">
    <source>
    </source>
</evidence>
<evidence type="ECO:0000303" key="10">
    <source>
    </source>
</evidence>
<evidence type="ECO:0000305" key="11"/>
<evidence type="ECO:0000312" key="12">
    <source>
        <dbReference type="HGNC" id="HGNC:25216"/>
    </source>
</evidence>